<protein>
    <recommendedName>
        <fullName>Enhancer of mRNA-decapping protein 4</fullName>
    </recommendedName>
</protein>
<feature type="chain" id="PRO_0000278965" description="Enhancer of mRNA-decapping protein 4">
    <location>
        <begin position="1"/>
        <end position="1384"/>
    </location>
</feature>
<feature type="repeat" description="WD 1">
    <location>
        <begin position="171"/>
        <end position="211"/>
    </location>
</feature>
<feature type="repeat" description="WD 2">
    <location>
        <begin position="227"/>
        <end position="274"/>
    </location>
</feature>
<feature type="repeat" description="WD 3">
    <location>
        <begin position="292"/>
        <end position="331"/>
    </location>
</feature>
<feature type="repeat" description="WD 4">
    <location>
        <begin position="340"/>
        <end position="390"/>
    </location>
</feature>
<feature type="region of interest" description="Disordered" evidence="3">
    <location>
        <begin position="471"/>
        <end position="494"/>
    </location>
</feature>
<feature type="region of interest" description="Disordered" evidence="3">
    <location>
        <begin position="551"/>
        <end position="584"/>
    </location>
</feature>
<feature type="region of interest" description="Disordered" evidence="3">
    <location>
        <begin position="796"/>
        <end position="931"/>
    </location>
</feature>
<feature type="coiled-coil region" evidence="2">
    <location>
        <begin position="930"/>
        <end position="1012"/>
    </location>
</feature>
<feature type="compositionally biased region" description="Polar residues" evidence="3">
    <location>
        <begin position="482"/>
        <end position="494"/>
    </location>
</feature>
<feature type="compositionally biased region" description="Basic and acidic residues" evidence="3">
    <location>
        <begin position="834"/>
        <end position="844"/>
    </location>
</feature>
<feature type="compositionally biased region" description="Polar residues" evidence="3">
    <location>
        <begin position="854"/>
        <end position="866"/>
    </location>
</feature>
<feature type="compositionally biased region" description="Polar residues" evidence="3">
    <location>
        <begin position="918"/>
        <end position="931"/>
    </location>
</feature>
<evidence type="ECO:0000250" key="1">
    <source>
        <dbReference type="UniProtKB" id="Q6P2E9"/>
    </source>
</evidence>
<evidence type="ECO:0000255" key="2"/>
<evidence type="ECO:0000256" key="3">
    <source>
        <dbReference type="SAM" id="MobiDB-lite"/>
    </source>
</evidence>
<evidence type="ECO:0000305" key="4"/>
<name>EDC4_DANRE</name>
<sequence>MASSSSMDIEGATQHLRDILKLDRPGNSAEASLVESQRKPSFNGELNGVLGSDLMGAAMVEPTVHNSDKLNGQDTQTICLSGDDGSICVPIRANIVEIVSSRDSSIDSKARGSNKVKIQPVAKYDWEHKYYYGNLIAVSNTYLAYAIRGANNHSMIRVLHLSSTERSLLKGFTGAVTDLAFAHLDSTLLGCVDEAGNMFIWQLTSHSSKIQDEVIVHIRRPEDTPLNSNRRLIWCPFIPEDNDESPEDACQTLALLHEDRAEVWDLDILRSNNSSWPVDATELKEGFITIRGHAARISEGALSPDGTVLATASHDGYVKFWQIYIEGQDQPRCLHEWQPHNGQPLSCLLFCDNHKKQDPDVPFWRFLITGADQNQELKMWCTVSWTCLQTIRFSPDPFNCGVLPSLKASLDLSAEFLILSDVQRKVLYVMELLQDQEKGRASFTAVSEFLLTHPVLSFGVQDVSRARLRHTEVLPPEEESESMTAEGNQGTSESRSGIQIKLYCVHTKSLQDVQIWFQPNQGDSSSLFMPQSGSQDGFSFSDPLADLNVEAMSSDKESGDSGSQNDLSKILPLPSPADFMSPAPSALPKLMTPDAFMTPSASMPASPGSSASSLTIVTAMSSSDSGARGGDDLTQSPKMSVECVNSSFANAGSPRSNSILISGLGENIQVSPPNPPLSLDLQAIDPMVVPQASPTRARSPDVISSASTAMSQDIPEIASETLQRGLSGANADSGPILHSDSMASAASILHLLSPRARSSAEHSLLPLELGAASVDGEQRLSNTPSLLETALSQENAGAAGGSCSDSSVNHAWPAAPDITRETRNSLRDNGLGDCSREEIKDRHISSPYHRRTYHLTQNDSQDASAEQSDHDDEVASLASSSGNCGPRSSHRLPVKDWKTSPRSSPKLKRKSKKDEGESSQSRQIESQMSTEVQDELLQMLRSQQREIAELRQNQLDLLQRVTSHMDAVQSSMMAHIEHAMLAQQEQEQRRMERILVEGQSRNQQLQDQLVQQLVQTLNNSLCNRLEKVLREEMKKTVPQTISKSLEPVTGQMNSTIAAKLTAVEGALKENVTKVVKSKNTTDAIGRAAAEAMQGPIQAAYKETFQSIVLPVFERGCQSMFQQINDSFKQGTNEYIQQLETHIKNRKQRDQDTRDPVIGQLQQMIDSLQSSQDQLASTVTASVSSDVQHQLHMIVGNLQDSILTQVQRIVKGEVSLAMKEQQAAVTSSIMQAMRSAAGTPVPSAHLDYQAQQASILQLLQQGQLNEAFQQALSAADLNLVLYVCETIDSQQVFGQQPCPLHQAVLLSLIQQLSTNLSTRTELKISYLEDAVMNLDHGDPVTRDHMSAVLTQVRQKLFLFLQQDAHSPMSKRARRLMMMLQGLVNH</sequence>
<comment type="function">
    <text evidence="1">In the process of mRNA degradation, seems to play a role in mRNA decapping.</text>
</comment>
<comment type="subcellular location">
    <subcellularLocation>
        <location evidence="1">Cytoplasm</location>
        <location evidence="1">P-body</location>
    </subcellularLocation>
    <subcellularLocation>
        <location evidence="1">Nucleus</location>
    </subcellularLocation>
</comment>
<comment type="similarity">
    <text evidence="4">Belongs to the WD repeat EDC4 family.</text>
</comment>
<proteinExistence type="inferred from homology"/>
<keyword id="KW-0175">Coiled coil</keyword>
<keyword id="KW-0963">Cytoplasm</keyword>
<keyword id="KW-0539">Nucleus</keyword>
<keyword id="KW-1185">Reference proteome</keyword>
<keyword id="KW-0677">Repeat</keyword>
<keyword id="KW-0853">WD repeat</keyword>
<organism>
    <name type="scientific">Danio rerio</name>
    <name type="common">Zebrafish</name>
    <name type="synonym">Brachydanio rerio</name>
    <dbReference type="NCBI Taxonomy" id="7955"/>
    <lineage>
        <taxon>Eukaryota</taxon>
        <taxon>Metazoa</taxon>
        <taxon>Chordata</taxon>
        <taxon>Craniata</taxon>
        <taxon>Vertebrata</taxon>
        <taxon>Euteleostomi</taxon>
        <taxon>Actinopterygii</taxon>
        <taxon>Neopterygii</taxon>
        <taxon>Teleostei</taxon>
        <taxon>Ostariophysi</taxon>
        <taxon>Cypriniformes</taxon>
        <taxon>Danionidae</taxon>
        <taxon>Danioninae</taxon>
        <taxon>Danio</taxon>
    </lineage>
</organism>
<gene>
    <name type="primary">edc4</name>
    <name type="ORF">si:dkey-16n13.6</name>
</gene>
<dbReference type="EMBL" id="BX927240">
    <property type="protein sequence ID" value="CAK05297.1"/>
    <property type="molecule type" value="Genomic_DNA"/>
</dbReference>
<dbReference type="RefSeq" id="NP_001038550.1">
    <property type="nucleotide sequence ID" value="NM_001045085.1"/>
</dbReference>
<dbReference type="FunCoup" id="Q1LUT1">
    <property type="interactions" value="2034"/>
</dbReference>
<dbReference type="STRING" id="7955.ENSDARP00000084220"/>
<dbReference type="PaxDb" id="7955-ENSDARP00000084220"/>
<dbReference type="Ensembl" id="ENSDART00000185550">
    <property type="protein sequence ID" value="ENSDARP00000157062"/>
    <property type="gene ID" value="ENSDARG00000114070"/>
</dbReference>
<dbReference type="GeneID" id="565659"/>
<dbReference type="KEGG" id="dre:565659"/>
<dbReference type="AGR" id="ZFIN:ZDB-GENE-030131-5032"/>
<dbReference type="CTD" id="23644"/>
<dbReference type="ZFIN" id="ZDB-GENE-030131-5032">
    <property type="gene designation" value="edc4"/>
</dbReference>
<dbReference type="eggNOG" id="KOG1916">
    <property type="taxonomic scope" value="Eukaryota"/>
</dbReference>
<dbReference type="InParanoid" id="Q1LUT1"/>
<dbReference type="OrthoDB" id="21128at2759"/>
<dbReference type="PhylomeDB" id="Q1LUT1"/>
<dbReference type="Reactome" id="R-DRE-430039">
    <property type="pathway name" value="mRNA decay by 5' to 3' exoribonuclease"/>
</dbReference>
<dbReference type="PRO" id="PR:Q1LUT1"/>
<dbReference type="Proteomes" id="UP000000437">
    <property type="component" value="Alternate scaffold 18"/>
</dbReference>
<dbReference type="Proteomes" id="UP000000437">
    <property type="component" value="Chromosome 18"/>
</dbReference>
<dbReference type="GO" id="GO:0005634">
    <property type="term" value="C:nucleus"/>
    <property type="evidence" value="ECO:0007669"/>
    <property type="project" value="UniProtKB-SubCell"/>
</dbReference>
<dbReference type="GO" id="GO:0000932">
    <property type="term" value="C:P-body"/>
    <property type="evidence" value="ECO:0000318"/>
    <property type="project" value="GO_Central"/>
</dbReference>
<dbReference type="GO" id="GO:0031087">
    <property type="term" value="P:deadenylation-independent decapping of nuclear-transcribed mRNA"/>
    <property type="evidence" value="ECO:0000318"/>
    <property type="project" value="GO_Central"/>
</dbReference>
<dbReference type="FunFam" id="1.10.220.100:FF:000001">
    <property type="entry name" value="Enhancer of mRNA-decapping protein 4"/>
    <property type="match status" value="1"/>
</dbReference>
<dbReference type="FunFam" id="2.130.10.10:FF:000138">
    <property type="entry name" value="Enhancer of mRNA-decapping protein 4"/>
    <property type="match status" value="1"/>
</dbReference>
<dbReference type="Gene3D" id="6.10.140.270">
    <property type="match status" value="1"/>
</dbReference>
<dbReference type="Gene3D" id="1.10.220.100">
    <property type="entry name" value="conserved c-terminal region of ge- 1"/>
    <property type="match status" value="1"/>
</dbReference>
<dbReference type="Gene3D" id="2.130.10.10">
    <property type="entry name" value="YVTN repeat-like/Quinoprotein amine dehydrogenase"/>
    <property type="match status" value="1"/>
</dbReference>
<dbReference type="InterPro" id="IPR045152">
    <property type="entry name" value="EDC4-like"/>
</dbReference>
<dbReference type="InterPro" id="IPR049404">
    <property type="entry name" value="EDC4_C"/>
</dbReference>
<dbReference type="InterPro" id="IPR044938">
    <property type="entry name" value="EDC4_C_sf"/>
</dbReference>
<dbReference type="InterPro" id="IPR032401">
    <property type="entry name" value="EDC4_WD40"/>
</dbReference>
<dbReference type="InterPro" id="IPR015943">
    <property type="entry name" value="WD40/YVTN_repeat-like_dom_sf"/>
</dbReference>
<dbReference type="InterPro" id="IPR036322">
    <property type="entry name" value="WD40_repeat_dom_sf"/>
</dbReference>
<dbReference type="InterPro" id="IPR001680">
    <property type="entry name" value="WD40_rpt"/>
</dbReference>
<dbReference type="PANTHER" id="PTHR15598">
    <property type="entry name" value="ENHANCER OF MRNA-DECAPPING PROTEIN 4"/>
    <property type="match status" value="1"/>
</dbReference>
<dbReference type="PANTHER" id="PTHR15598:SF5">
    <property type="entry name" value="ENHANCER OF MRNA-DECAPPING PROTEIN 4"/>
    <property type="match status" value="1"/>
</dbReference>
<dbReference type="Pfam" id="PF21289">
    <property type="entry name" value="EDC4_C"/>
    <property type="match status" value="1"/>
</dbReference>
<dbReference type="Pfam" id="PF16529">
    <property type="entry name" value="Ge1_WD40"/>
    <property type="match status" value="1"/>
</dbReference>
<dbReference type="SMART" id="SM00320">
    <property type="entry name" value="WD40"/>
    <property type="match status" value="3"/>
</dbReference>
<dbReference type="SUPFAM" id="SSF50978">
    <property type="entry name" value="WD40 repeat-like"/>
    <property type="match status" value="1"/>
</dbReference>
<dbReference type="PROSITE" id="PS50082">
    <property type="entry name" value="WD_REPEATS_2"/>
    <property type="match status" value="1"/>
</dbReference>
<dbReference type="PROSITE" id="PS50294">
    <property type="entry name" value="WD_REPEATS_REGION"/>
    <property type="match status" value="1"/>
</dbReference>
<reference key="1">
    <citation type="journal article" date="2013" name="Nature">
        <title>The zebrafish reference genome sequence and its relationship to the human genome.</title>
        <authorList>
            <person name="Howe K."/>
            <person name="Clark M.D."/>
            <person name="Torroja C.F."/>
            <person name="Torrance J."/>
            <person name="Berthelot C."/>
            <person name="Muffato M."/>
            <person name="Collins J.E."/>
            <person name="Humphray S."/>
            <person name="McLaren K."/>
            <person name="Matthews L."/>
            <person name="McLaren S."/>
            <person name="Sealy I."/>
            <person name="Caccamo M."/>
            <person name="Churcher C."/>
            <person name="Scott C."/>
            <person name="Barrett J.C."/>
            <person name="Koch R."/>
            <person name="Rauch G.J."/>
            <person name="White S."/>
            <person name="Chow W."/>
            <person name="Kilian B."/>
            <person name="Quintais L.T."/>
            <person name="Guerra-Assuncao J.A."/>
            <person name="Zhou Y."/>
            <person name="Gu Y."/>
            <person name="Yen J."/>
            <person name="Vogel J.H."/>
            <person name="Eyre T."/>
            <person name="Redmond S."/>
            <person name="Banerjee R."/>
            <person name="Chi J."/>
            <person name="Fu B."/>
            <person name="Langley E."/>
            <person name="Maguire S.F."/>
            <person name="Laird G.K."/>
            <person name="Lloyd D."/>
            <person name="Kenyon E."/>
            <person name="Donaldson S."/>
            <person name="Sehra H."/>
            <person name="Almeida-King J."/>
            <person name="Loveland J."/>
            <person name="Trevanion S."/>
            <person name="Jones M."/>
            <person name="Quail M."/>
            <person name="Willey D."/>
            <person name="Hunt A."/>
            <person name="Burton J."/>
            <person name="Sims S."/>
            <person name="McLay K."/>
            <person name="Plumb B."/>
            <person name="Davis J."/>
            <person name="Clee C."/>
            <person name="Oliver K."/>
            <person name="Clark R."/>
            <person name="Riddle C."/>
            <person name="Elliot D."/>
            <person name="Threadgold G."/>
            <person name="Harden G."/>
            <person name="Ware D."/>
            <person name="Begum S."/>
            <person name="Mortimore B."/>
            <person name="Kerry G."/>
            <person name="Heath P."/>
            <person name="Phillimore B."/>
            <person name="Tracey A."/>
            <person name="Corby N."/>
            <person name="Dunn M."/>
            <person name="Johnson C."/>
            <person name="Wood J."/>
            <person name="Clark S."/>
            <person name="Pelan S."/>
            <person name="Griffiths G."/>
            <person name="Smith M."/>
            <person name="Glithero R."/>
            <person name="Howden P."/>
            <person name="Barker N."/>
            <person name="Lloyd C."/>
            <person name="Stevens C."/>
            <person name="Harley J."/>
            <person name="Holt K."/>
            <person name="Panagiotidis G."/>
            <person name="Lovell J."/>
            <person name="Beasley H."/>
            <person name="Henderson C."/>
            <person name="Gordon D."/>
            <person name="Auger K."/>
            <person name="Wright D."/>
            <person name="Collins J."/>
            <person name="Raisen C."/>
            <person name="Dyer L."/>
            <person name="Leung K."/>
            <person name="Robertson L."/>
            <person name="Ambridge K."/>
            <person name="Leongamornlert D."/>
            <person name="McGuire S."/>
            <person name="Gilderthorp R."/>
            <person name="Griffiths C."/>
            <person name="Manthravadi D."/>
            <person name="Nichol S."/>
            <person name="Barker G."/>
            <person name="Whitehead S."/>
            <person name="Kay M."/>
            <person name="Brown J."/>
            <person name="Murnane C."/>
            <person name="Gray E."/>
            <person name="Humphries M."/>
            <person name="Sycamore N."/>
            <person name="Barker D."/>
            <person name="Saunders D."/>
            <person name="Wallis J."/>
            <person name="Babbage A."/>
            <person name="Hammond S."/>
            <person name="Mashreghi-Mohammadi M."/>
            <person name="Barr L."/>
            <person name="Martin S."/>
            <person name="Wray P."/>
            <person name="Ellington A."/>
            <person name="Matthews N."/>
            <person name="Ellwood M."/>
            <person name="Woodmansey R."/>
            <person name="Clark G."/>
            <person name="Cooper J."/>
            <person name="Tromans A."/>
            <person name="Grafham D."/>
            <person name="Skuce C."/>
            <person name="Pandian R."/>
            <person name="Andrews R."/>
            <person name="Harrison E."/>
            <person name="Kimberley A."/>
            <person name="Garnett J."/>
            <person name="Fosker N."/>
            <person name="Hall R."/>
            <person name="Garner P."/>
            <person name="Kelly D."/>
            <person name="Bird C."/>
            <person name="Palmer S."/>
            <person name="Gehring I."/>
            <person name="Berger A."/>
            <person name="Dooley C.M."/>
            <person name="Ersan-Urun Z."/>
            <person name="Eser C."/>
            <person name="Geiger H."/>
            <person name="Geisler M."/>
            <person name="Karotki L."/>
            <person name="Kirn A."/>
            <person name="Konantz J."/>
            <person name="Konantz M."/>
            <person name="Oberlander M."/>
            <person name="Rudolph-Geiger S."/>
            <person name="Teucke M."/>
            <person name="Lanz C."/>
            <person name="Raddatz G."/>
            <person name="Osoegawa K."/>
            <person name="Zhu B."/>
            <person name="Rapp A."/>
            <person name="Widaa S."/>
            <person name="Langford C."/>
            <person name="Yang F."/>
            <person name="Schuster S.C."/>
            <person name="Carter N.P."/>
            <person name="Harrow J."/>
            <person name="Ning Z."/>
            <person name="Herrero J."/>
            <person name="Searle S.M."/>
            <person name="Enright A."/>
            <person name="Geisler R."/>
            <person name="Plasterk R.H."/>
            <person name="Lee C."/>
            <person name="Westerfield M."/>
            <person name="de Jong P.J."/>
            <person name="Zon L.I."/>
            <person name="Postlethwait J.H."/>
            <person name="Nusslein-Volhard C."/>
            <person name="Hubbard T.J."/>
            <person name="Roest Crollius H."/>
            <person name="Rogers J."/>
            <person name="Stemple D.L."/>
        </authorList>
    </citation>
    <scope>NUCLEOTIDE SEQUENCE [LARGE SCALE GENOMIC DNA]</scope>
    <source>
        <strain>Tuebingen</strain>
    </source>
</reference>
<accession>Q1LUT1</accession>